<reference key="1">
    <citation type="submission" date="2008-12" db="EMBL/GenBank/DDBJ databases">
        <title>Complete sequence of chromosome of Methylobacterium chloromethanicum CM4.</title>
        <authorList>
            <consortium name="US DOE Joint Genome Institute"/>
            <person name="Lucas S."/>
            <person name="Copeland A."/>
            <person name="Lapidus A."/>
            <person name="Glavina del Rio T."/>
            <person name="Dalin E."/>
            <person name="Tice H."/>
            <person name="Bruce D."/>
            <person name="Goodwin L."/>
            <person name="Pitluck S."/>
            <person name="Chertkov O."/>
            <person name="Brettin T."/>
            <person name="Detter J.C."/>
            <person name="Han C."/>
            <person name="Larimer F."/>
            <person name="Land M."/>
            <person name="Hauser L."/>
            <person name="Kyrpides N."/>
            <person name="Mikhailova N."/>
            <person name="Marx C."/>
            <person name="Richardson P."/>
        </authorList>
    </citation>
    <scope>NUCLEOTIDE SEQUENCE [LARGE SCALE GENOMIC DNA]</scope>
    <source>
        <strain>CM4 / NCIMB 13688</strain>
    </source>
</reference>
<organism>
    <name type="scientific">Methylorubrum extorquens (strain CM4 / NCIMB 13688)</name>
    <name type="common">Methylobacterium extorquens</name>
    <dbReference type="NCBI Taxonomy" id="440085"/>
    <lineage>
        <taxon>Bacteria</taxon>
        <taxon>Pseudomonadati</taxon>
        <taxon>Pseudomonadota</taxon>
        <taxon>Alphaproteobacteria</taxon>
        <taxon>Hyphomicrobiales</taxon>
        <taxon>Methylobacteriaceae</taxon>
        <taxon>Methylorubrum</taxon>
    </lineage>
</organism>
<feature type="chain" id="PRO_1000195982" description="Large ribosomal subunit protein bL32">
    <location>
        <begin position="1"/>
        <end position="62"/>
    </location>
</feature>
<feature type="region of interest" description="Disordered" evidence="2">
    <location>
        <begin position="1"/>
        <end position="44"/>
    </location>
</feature>
<feature type="compositionally biased region" description="Basic residues" evidence="2">
    <location>
        <begin position="1"/>
        <end position="16"/>
    </location>
</feature>
<feature type="compositionally biased region" description="Basic and acidic residues" evidence="2">
    <location>
        <begin position="28"/>
        <end position="44"/>
    </location>
</feature>
<protein>
    <recommendedName>
        <fullName evidence="1">Large ribosomal subunit protein bL32</fullName>
    </recommendedName>
    <alternativeName>
        <fullName evidence="3">50S ribosomal protein L32</fullName>
    </alternativeName>
</protein>
<dbReference type="EMBL" id="CP001298">
    <property type="protein sequence ID" value="ACK84593.1"/>
    <property type="molecule type" value="Genomic_DNA"/>
</dbReference>
<dbReference type="RefSeq" id="WP_003601373.1">
    <property type="nucleotide sequence ID" value="NC_011757.1"/>
</dbReference>
<dbReference type="SMR" id="B7KX68"/>
<dbReference type="GeneID" id="96602163"/>
<dbReference type="KEGG" id="mch:Mchl_3774"/>
<dbReference type="HOGENOM" id="CLU_129084_2_2_5"/>
<dbReference type="Proteomes" id="UP000002385">
    <property type="component" value="Chromosome"/>
</dbReference>
<dbReference type="GO" id="GO:0015934">
    <property type="term" value="C:large ribosomal subunit"/>
    <property type="evidence" value="ECO:0007669"/>
    <property type="project" value="InterPro"/>
</dbReference>
<dbReference type="GO" id="GO:0003735">
    <property type="term" value="F:structural constituent of ribosome"/>
    <property type="evidence" value="ECO:0007669"/>
    <property type="project" value="InterPro"/>
</dbReference>
<dbReference type="GO" id="GO:0006412">
    <property type="term" value="P:translation"/>
    <property type="evidence" value="ECO:0007669"/>
    <property type="project" value="UniProtKB-UniRule"/>
</dbReference>
<dbReference type="Gene3D" id="1.20.5.640">
    <property type="entry name" value="Single helix bin"/>
    <property type="match status" value="1"/>
</dbReference>
<dbReference type="HAMAP" id="MF_00340">
    <property type="entry name" value="Ribosomal_bL32"/>
    <property type="match status" value="1"/>
</dbReference>
<dbReference type="InterPro" id="IPR002677">
    <property type="entry name" value="Ribosomal_bL32"/>
</dbReference>
<dbReference type="InterPro" id="IPR044957">
    <property type="entry name" value="Ribosomal_bL32_bact"/>
</dbReference>
<dbReference type="InterPro" id="IPR011332">
    <property type="entry name" value="Ribosomal_zn-bd"/>
</dbReference>
<dbReference type="NCBIfam" id="TIGR01031">
    <property type="entry name" value="rpmF_bact"/>
    <property type="match status" value="1"/>
</dbReference>
<dbReference type="PANTHER" id="PTHR35534">
    <property type="entry name" value="50S RIBOSOMAL PROTEIN L32"/>
    <property type="match status" value="1"/>
</dbReference>
<dbReference type="PANTHER" id="PTHR35534:SF1">
    <property type="entry name" value="LARGE RIBOSOMAL SUBUNIT PROTEIN BL32"/>
    <property type="match status" value="1"/>
</dbReference>
<dbReference type="Pfam" id="PF01783">
    <property type="entry name" value="Ribosomal_L32p"/>
    <property type="match status" value="1"/>
</dbReference>
<dbReference type="SUPFAM" id="SSF57829">
    <property type="entry name" value="Zn-binding ribosomal proteins"/>
    <property type="match status" value="1"/>
</dbReference>
<keyword id="KW-0687">Ribonucleoprotein</keyword>
<keyword id="KW-0689">Ribosomal protein</keyword>
<name>RL32_METC4</name>
<sequence length="62" mass="7035">MAVPKRKTSPSRRGMRRSADALKAPTYVEDKDSGELRRPHHIDLKTGMYRGRQVLKVKSAEA</sequence>
<gene>
    <name evidence="1" type="primary">rpmF</name>
    <name type="ordered locus">Mchl_3774</name>
</gene>
<proteinExistence type="inferred from homology"/>
<accession>B7KX68</accession>
<evidence type="ECO:0000255" key="1">
    <source>
        <dbReference type="HAMAP-Rule" id="MF_00340"/>
    </source>
</evidence>
<evidence type="ECO:0000256" key="2">
    <source>
        <dbReference type="SAM" id="MobiDB-lite"/>
    </source>
</evidence>
<evidence type="ECO:0000305" key="3"/>
<comment type="similarity">
    <text evidence="1">Belongs to the bacterial ribosomal protein bL32 family.</text>
</comment>